<protein>
    <recommendedName>
        <fullName>Protein Rev</fullName>
    </recommendedName>
    <alternativeName>
        <fullName>Regulator of expression of viral proteins</fullName>
    </alternativeName>
</protein>
<feature type="chain" id="PRO_0000085294" description="Protein Rev">
    <location>
        <begin position="1"/>
        <end position="83"/>
    </location>
</feature>
<feature type="region of interest" description="Homomultimerization" evidence="1">
    <location>
        <begin position="17"/>
        <end position="24"/>
    </location>
</feature>
<feature type="short sequence motif" description="Nuclear localization signal and RNA-binding (RRE)" evidence="1">
    <location>
        <begin position="29"/>
        <end position="45"/>
    </location>
</feature>
<feature type="short sequence motif" description="Nuclear export signal" evidence="1">
    <location>
        <begin position="65"/>
        <end position="76"/>
    </location>
</feature>
<evidence type="ECO:0000250" key="1"/>
<gene>
    <name type="primary">rev</name>
</gene>
<accession>P36339</accession>
<sequence>MSTGNVDQELIRRYLVVVKKLYEEPIPQTARQRRRRKQQLRTRRAQLRELEGRILKQILDRGPDQLCQGVANLALAEKSESSN</sequence>
<comment type="function">
    <text evidence="1">Escorts unspliced or incompletely spliced viral pre-mRNAs (late transcripts) out of the nucleus of infected cells. These pre-mRNAs carry a recognition sequence called Rev responsive element (RRE) located in the env gene, that is not present in fully spliced viral mRNAs (early transcripts). This function is essential since most viral proteins are translated from unspliced or partially spliced pre-mRNAs which cannot exit the nucleus by the pathway used by fully processed cellular mRNAs (By similarity).</text>
</comment>
<comment type="subunit">
    <text evidence="1">Homomultimer; when bound to the RRE. Multimeric assembly is essential for activity (By similarity).</text>
</comment>
<comment type="subcellular location">
    <subcellularLocation>
        <location>Host nucleus</location>
        <location>Host nucleolus</location>
    </subcellularLocation>
    <subcellularLocation>
        <location>Host cytoplasm</location>
    </subcellularLocation>
    <text evidence="1">The presence of both nuclear import and nuclear export signals leads to continuous shuttling between the nucleus and cytoplasm.</text>
</comment>
<comment type="domain">
    <text evidence="1">The RNA-binding motif binds to the RRE, a stem-and-loop structure present in incompletely spliced viral pre-mRNAs. This region also contains the NLS which mediates nuclear localization. These overlapping functions prevent Rev bound to RRE from undesirable return to the nucleus. When Rev binds the RRE, the NLS becomes masked while the NES remains accessible (By similarity).</text>
</comment>
<comment type="sequence caution">
    <conflict type="miscellaneous discrepancy">
        <sequence resource="EMBL-CDS" id="AAA47726"/>
    </conflict>
</comment>
<name>REV_SIVAM</name>
<reference key="1">
    <citation type="journal article" date="1992" name="Arch. Virol.">
        <title>Genetic characterization of simian immunodeficiency virus isolated from an African mandrill.</title>
        <authorList>
            <person name="Sakai H."/>
            <person name="Sakuragi J."/>
            <person name="Sakuragi S."/>
            <person name="Shibata R."/>
            <person name="Hayami M."/>
            <person name="Ishimoto A."/>
            <person name="Adachi A."/>
        </authorList>
    </citation>
    <scope>NUCLEOTIDE SEQUENCE [GENOMIC RNA]</scope>
</reference>
<keyword id="KW-1035">Host cytoplasm</keyword>
<keyword id="KW-1048">Host nucleus</keyword>
<keyword id="KW-0509">mRNA transport</keyword>
<keyword id="KW-0694">RNA-binding</keyword>
<keyword id="KW-0813">Transport</keyword>
<organismHost>
    <name type="scientific">Cercopithecidae</name>
    <name type="common">Old World monkeys</name>
    <dbReference type="NCBI Taxonomy" id="9527"/>
</organismHost>
<organism>
    <name type="scientific">Simian immunodeficiency virus (isolate African mandrill)</name>
    <name type="common">SIV-mnd</name>
    <dbReference type="NCBI Taxonomy" id="36378"/>
    <lineage>
        <taxon>Viruses</taxon>
        <taxon>Riboviria</taxon>
        <taxon>Pararnavirae</taxon>
        <taxon>Artverviricota</taxon>
        <taxon>Revtraviricetes</taxon>
        <taxon>Ortervirales</taxon>
        <taxon>Retroviridae</taxon>
        <taxon>Orthoretrovirinae</taxon>
        <taxon>Lentivirus</taxon>
        <taxon>Simian immunodeficiency virus</taxon>
    </lineage>
</organism>
<proteinExistence type="inferred from homology"/>
<dbReference type="EMBL" id="AH002411">
    <property type="protein sequence ID" value="AAA47726.1"/>
    <property type="status" value="ALT_SEQ"/>
    <property type="molecule type" value="Genomic_RNA"/>
</dbReference>
<dbReference type="PIR" id="B48344">
    <property type="entry name" value="B48344"/>
</dbReference>
<dbReference type="SMR" id="P36339"/>
<dbReference type="GO" id="GO:0030430">
    <property type="term" value="C:host cell cytoplasm"/>
    <property type="evidence" value="ECO:0007669"/>
    <property type="project" value="UniProtKB-SubCell"/>
</dbReference>
<dbReference type="GO" id="GO:0044196">
    <property type="term" value="C:host cell nucleolus"/>
    <property type="evidence" value="ECO:0007669"/>
    <property type="project" value="UniProtKB-SubCell"/>
</dbReference>
<dbReference type="GO" id="GO:0003723">
    <property type="term" value="F:RNA binding"/>
    <property type="evidence" value="ECO:0007669"/>
    <property type="project" value="UniProtKB-KW"/>
</dbReference>
<dbReference type="GO" id="GO:0051028">
    <property type="term" value="P:mRNA transport"/>
    <property type="evidence" value="ECO:0007669"/>
    <property type="project" value="UniProtKB-KW"/>
</dbReference>
<dbReference type="Gene3D" id="6.10.140.630">
    <property type="match status" value="1"/>
</dbReference>